<accession>Q9AKP3</accession>
<dbReference type="EMBL" id="AJ293315">
    <property type="protein sequence ID" value="CAC33605.1"/>
    <property type="molecule type" value="Genomic_DNA"/>
</dbReference>
<dbReference type="SMR" id="Q9AKP3"/>
<dbReference type="GO" id="GO:0009986">
    <property type="term" value="C:cell surface"/>
    <property type="evidence" value="ECO:0007669"/>
    <property type="project" value="UniProtKB-SubCell"/>
</dbReference>
<dbReference type="GO" id="GO:0003779">
    <property type="term" value="F:actin binding"/>
    <property type="evidence" value="ECO:0007669"/>
    <property type="project" value="UniProtKB-KW"/>
</dbReference>
<dbReference type="Gene3D" id="6.10.280.150">
    <property type="match status" value="1"/>
</dbReference>
<dbReference type="InterPro" id="IPR003124">
    <property type="entry name" value="WH2_dom"/>
</dbReference>
<dbReference type="PRINTS" id="PR01217">
    <property type="entry name" value="PRICHEXTENSN"/>
</dbReference>
<dbReference type="SMART" id="SM00246">
    <property type="entry name" value="WH2"/>
    <property type="match status" value="2"/>
</dbReference>
<dbReference type="PROSITE" id="PS51082">
    <property type="entry name" value="WH2"/>
    <property type="match status" value="2"/>
</dbReference>
<proteinExistence type="inferred from homology"/>
<protein>
    <recommendedName>
        <fullName>Arp2/3 complex-activating protein rickA</fullName>
    </recommendedName>
    <alternativeName>
        <fullName>Actin polymerization protein rickA</fullName>
    </alternativeName>
</protein>
<sequence length="602" mass="67490">MTKEIDINKLLAQENNALNTILSQVNELCEQNKQLQGLIEIQNETKALEKEYNRSLPWFKRFVNTVSNVKYIFIKSEEQLTNEAIKYNNKILKDIDNKIYNIAEKSVSLKQELQEEIEKNFKDLTKKDLSKDQRERLSEVFFSYKSKPERFSALHMTNPLQFINAEELEKQYNSLNATKQNIQNLISENSNVKELKEIQKQVAEIREEVPYTFFEKLNNIWQNVKNVFVNNSEQVLAKNKESNTRTIRKIDEQLYKTKHKFEELIENKERNINDIIAKLPDNEELQKIVSNLTNHMASTKEPILTNSSLAKPLENNITPPPPLPGNNIPSPPPPPPPLPGNNIPSPPPPPPPLPGNNIPSPPPPPPPLPGNNIPSPPPPPPPLSGNNIPSPPPPPPPLSGNNIPSPPPPPPPLPGNNIPSPPPPPPPLSQNNIPPPPPPPMAPVSAQTEKLSKPVEATTVKKPENQPRPSIDTSDLMREIAGPKKLRKVEETDVKVQDSRDLLLQSIRGEHKLKKVEFDPNTGKPVAHSHSKPVQNVNKLSGVASILARRVVMEMSDSSGSESDSGNWSDVGVNRNTKTLKTKRERRKILNNRNSQKPSFVK</sequence>
<keyword id="KW-0009">Actin-binding</keyword>
<keyword id="KW-0677">Repeat</keyword>
<comment type="function">
    <text evidence="1">Recruits and activates the Arp2/3 complex, which in turn leads to actin polymerization, promoting Rickettsia motility during infection.</text>
</comment>
<comment type="subunit">
    <text evidence="1">Homodimer.</text>
</comment>
<comment type="subcellular location">
    <subcellularLocation>
        <location evidence="1">Cell surface</location>
    </subcellularLocation>
</comment>
<organism>
    <name type="scientific">Rickettsia montanensis</name>
    <dbReference type="NCBI Taxonomy" id="33991"/>
    <lineage>
        <taxon>Bacteria</taxon>
        <taxon>Pseudomonadati</taxon>
        <taxon>Pseudomonadota</taxon>
        <taxon>Alphaproteobacteria</taxon>
        <taxon>Rickettsiales</taxon>
        <taxon>Rickettsiaceae</taxon>
        <taxon>Rickettsieae</taxon>
        <taxon>Rickettsia</taxon>
        <taxon>spotted fever group</taxon>
    </lineage>
</organism>
<gene>
    <name type="primary">rickA</name>
</gene>
<name>RICKA_RICMO</name>
<reference key="1">
    <citation type="journal article" date="2001" name="Mol. Biol. Evol.">
        <title>Pseudogenes, junk DNA, and the dynamics of Rickettsia genomes.</title>
        <authorList>
            <person name="Andersson J.O."/>
            <person name="Andersson S.G.E."/>
        </authorList>
    </citation>
    <scope>NUCLEOTIDE SEQUENCE [GENOMIC DNA]</scope>
</reference>
<reference key="2">
    <citation type="journal article" date="2004" name="Cell. Microbiol.">
        <title>A Rickettsia WASP-like protein activates the Arp2/3 complex and mediates actin-based motility.</title>
        <authorList>
            <person name="Jeng R.L."/>
            <person name="Goley E.D."/>
            <person name="D'Alessio J.A."/>
            <person name="Chaga O.Y."/>
            <person name="Svitkina T.M."/>
            <person name="Borisy G.G."/>
            <person name="Heinzen R.A."/>
            <person name="Welch M.D."/>
        </authorList>
    </citation>
    <scope>EXPRESSION</scope>
</reference>
<feature type="chain" id="PRO_0000259656" description="Arp2/3 complex-activating protein rickA">
    <location>
        <begin position="1"/>
        <end position="602"/>
    </location>
</feature>
<feature type="domain" description="WH2 1" evidence="2">
    <location>
        <begin position="472"/>
        <end position="489"/>
    </location>
</feature>
<feature type="domain" description="WH2 2" evidence="2">
    <location>
        <begin position="499"/>
        <end position="516"/>
    </location>
</feature>
<feature type="region of interest" description="Disordered" evidence="3">
    <location>
        <begin position="307"/>
        <end position="484"/>
    </location>
</feature>
<feature type="region of interest" description="Disordered" evidence="3">
    <location>
        <begin position="516"/>
        <end position="535"/>
    </location>
</feature>
<feature type="region of interest" description="Central and acidic domains">
    <location>
        <begin position="537"/>
        <end position="570"/>
    </location>
</feature>
<feature type="region of interest" description="Disordered" evidence="3">
    <location>
        <begin position="555"/>
        <end position="602"/>
    </location>
</feature>
<feature type="compositionally biased region" description="Pro residues" evidence="3">
    <location>
        <begin position="318"/>
        <end position="442"/>
    </location>
</feature>
<feature type="compositionally biased region" description="Basic and acidic residues" evidence="3">
    <location>
        <begin position="475"/>
        <end position="484"/>
    </location>
</feature>
<feature type="compositionally biased region" description="Low complexity" evidence="3">
    <location>
        <begin position="555"/>
        <end position="566"/>
    </location>
</feature>
<feature type="compositionally biased region" description="Basic residues" evidence="3">
    <location>
        <begin position="578"/>
        <end position="590"/>
    </location>
</feature>
<feature type="compositionally biased region" description="Polar residues" evidence="3">
    <location>
        <begin position="591"/>
        <end position="602"/>
    </location>
</feature>
<evidence type="ECO:0000250" key="1"/>
<evidence type="ECO:0000255" key="2">
    <source>
        <dbReference type="PROSITE-ProRule" id="PRU00406"/>
    </source>
</evidence>
<evidence type="ECO:0000256" key="3">
    <source>
        <dbReference type="SAM" id="MobiDB-lite"/>
    </source>
</evidence>